<gene>
    <name type="ordered locus">RB1416</name>
    <name type="ORF">SMb20709</name>
</gene>
<name>3MGH_RHIME</name>
<keyword id="KW-0227">DNA damage</keyword>
<keyword id="KW-0234">DNA repair</keyword>
<keyword id="KW-0378">Hydrolase</keyword>
<keyword id="KW-0614">Plasmid</keyword>
<keyword id="KW-1185">Reference proteome</keyword>
<proteinExistence type="inferred from homology"/>
<organism>
    <name type="scientific">Rhizobium meliloti (strain 1021)</name>
    <name type="common">Ensifer meliloti</name>
    <name type="synonym">Sinorhizobium meliloti</name>
    <dbReference type="NCBI Taxonomy" id="266834"/>
    <lineage>
        <taxon>Bacteria</taxon>
        <taxon>Pseudomonadati</taxon>
        <taxon>Pseudomonadota</taxon>
        <taxon>Alphaproteobacteria</taxon>
        <taxon>Hyphomicrobiales</taxon>
        <taxon>Rhizobiaceae</taxon>
        <taxon>Sinorhizobium/Ensifer group</taxon>
        <taxon>Sinorhizobium</taxon>
    </lineage>
</organism>
<accession>Q92TT1</accession>
<evidence type="ECO:0000255" key="1">
    <source>
        <dbReference type="HAMAP-Rule" id="MF_00527"/>
    </source>
</evidence>
<reference key="1">
    <citation type="journal article" date="2001" name="Proc. Natl. Acad. Sci. U.S.A.">
        <title>The complete sequence of the 1,683-kb pSymB megaplasmid from the N2-fixing endosymbiont Sinorhizobium meliloti.</title>
        <authorList>
            <person name="Finan T.M."/>
            <person name="Weidner S."/>
            <person name="Wong K."/>
            <person name="Buhrmester J."/>
            <person name="Chain P."/>
            <person name="Vorhoelter F.J."/>
            <person name="Hernandez-Lucas I."/>
            <person name="Becker A."/>
            <person name="Cowie A."/>
            <person name="Gouzy J."/>
            <person name="Golding B."/>
            <person name="Puehler A."/>
        </authorList>
    </citation>
    <scope>NUCLEOTIDE SEQUENCE [LARGE SCALE GENOMIC DNA]</scope>
    <source>
        <strain>1021</strain>
    </source>
</reference>
<reference key="2">
    <citation type="journal article" date="2001" name="Science">
        <title>The composite genome of the legume symbiont Sinorhizobium meliloti.</title>
        <authorList>
            <person name="Galibert F."/>
            <person name="Finan T.M."/>
            <person name="Long S.R."/>
            <person name="Puehler A."/>
            <person name="Abola P."/>
            <person name="Ampe F."/>
            <person name="Barloy-Hubler F."/>
            <person name="Barnett M.J."/>
            <person name="Becker A."/>
            <person name="Boistard P."/>
            <person name="Bothe G."/>
            <person name="Boutry M."/>
            <person name="Bowser L."/>
            <person name="Buhrmester J."/>
            <person name="Cadieu E."/>
            <person name="Capela D."/>
            <person name="Chain P."/>
            <person name="Cowie A."/>
            <person name="Davis R.W."/>
            <person name="Dreano S."/>
            <person name="Federspiel N.A."/>
            <person name="Fisher R.F."/>
            <person name="Gloux S."/>
            <person name="Godrie T."/>
            <person name="Goffeau A."/>
            <person name="Golding B."/>
            <person name="Gouzy J."/>
            <person name="Gurjal M."/>
            <person name="Hernandez-Lucas I."/>
            <person name="Hong A."/>
            <person name="Huizar L."/>
            <person name="Hyman R.W."/>
            <person name="Jones T."/>
            <person name="Kahn D."/>
            <person name="Kahn M.L."/>
            <person name="Kalman S."/>
            <person name="Keating D.H."/>
            <person name="Kiss E."/>
            <person name="Komp C."/>
            <person name="Lelaure V."/>
            <person name="Masuy D."/>
            <person name="Palm C."/>
            <person name="Peck M.C."/>
            <person name="Pohl T.M."/>
            <person name="Portetelle D."/>
            <person name="Purnelle B."/>
            <person name="Ramsperger U."/>
            <person name="Surzycki R."/>
            <person name="Thebault P."/>
            <person name="Vandenbol M."/>
            <person name="Vorhoelter F.J."/>
            <person name="Weidner S."/>
            <person name="Wells D.H."/>
            <person name="Wong K."/>
            <person name="Yeh K.-C."/>
            <person name="Batut J."/>
        </authorList>
    </citation>
    <scope>NUCLEOTIDE SEQUENCE [LARGE SCALE GENOMIC DNA]</scope>
    <source>
        <strain>1021</strain>
    </source>
</reference>
<geneLocation type="plasmid">
    <name>pSymB</name>
    <name>megaplasmid 2</name>
</geneLocation>
<comment type="similarity">
    <text evidence="1">Belongs to the DNA glycosylase MPG family.</text>
</comment>
<dbReference type="EC" id="3.2.2.-" evidence="1"/>
<dbReference type="EMBL" id="AL591985">
    <property type="protein sequence ID" value="CAC49816.1"/>
    <property type="molecule type" value="Genomic_DNA"/>
</dbReference>
<dbReference type="PIR" id="H96018">
    <property type="entry name" value="H96018"/>
</dbReference>
<dbReference type="RefSeq" id="NP_437956.1">
    <property type="nucleotide sequence ID" value="NC_003078.1"/>
</dbReference>
<dbReference type="RefSeq" id="WP_003530532.1">
    <property type="nucleotide sequence ID" value="NC_003078.1"/>
</dbReference>
<dbReference type="SMR" id="Q92TT1"/>
<dbReference type="EnsemblBacteria" id="CAC49816">
    <property type="protein sequence ID" value="CAC49816"/>
    <property type="gene ID" value="SM_b20709"/>
</dbReference>
<dbReference type="KEGG" id="sme:SM_b20709"/>
<dbReference type="PATRIC" id="fig|266834.11.peg.6338"/>
<dbReference type="eggNOG" id="COG2094">
    <property type="taxonomic scope" value="Bacteria"/>
</dbReference>
<dbReference type="HOGENOM" id="CLU_060471_3_0_5"/>
<dbReference type="OrthoDB" id="9794313at2"/>
<dbReference type="Proteomes" id="UP000001976">
    <property type="component" value="Plasmid pSymB"/>
</dbReference>
<dbReference type="GO" id="GO:0003905">
    <property type="term" value="F:alkylbase DNA N-glycosylase activity"/>
    <property type="evidence" value="ECO:0007669"/>
    <property type="project" value="InterPro"/>
</dbReference>
<dbReference type="GO" id="GO:0003677">
    <property type="term" value="F:DNA binding"/>
    <property type="evidence" value="ECO:0007669"/>
    <property type="project" value="InterPro"/>
</dbReference>
<dbReference type="GO" id="GO:0006284">
    <property type="term" value="P:base-excision repair"/>
    <property type="evidence" value="ECO:0007669"/>
    <property type="project" value="InterPro"/>
</dbReference>
<dbReference type="CDD" id="cd00540">
    <property type="entry name" value="AAG"/>
    <property type="match status" value="1"/>
</dbReference>
<dbReference type="Gene3D" id="3.10.300.10">
    <property type="entry name" value="Methylpurine-DNA glycosylase (MPG)"/>
    <property type="match status" value="1"/>
</dbReference>
<dbReference type="HAMAP" id="MF_00527">
    <property type="entry name" value="3MGH"/>
    <property type="match status" value="1"/>
</dbReference>
<dbReference type="InterPro" id="IPR011034">
    <property type="entry name" value="Formyl_transferase-like_C_sf"/>
</dbReference>
<dbReference type="InterPro" id="IPR003180">
    <property type="entry name" value="MPG"/>
</dbReference>
<dbReference type="InterPro" id="IPR036995">
    <property type="entry name" value="MPG_sf"/>
</dbReference>
<dbReference type="NCBIfam" id="TIGR00567">
    <property type="entry name" value="3mg"/>
    <property type="match status" value="1"/>
</dbReference>
<dbReference type="NCBIfam" id="NF002003">
    <property type="entry name" value="PRK00802.1-3"/>
    <property type="match status" value="1"/>
</dbReference>
<dbReference type="PANTHER" id="PTHR10429">
    <property type="entry name" value="DNA-3-METHYLADENINE GLYCOSYLASE"/>
    <property type="match status" value="1"/>
</dbReference>
<dbReference type="PANTHER" id="PTHR10429:SF0">
    <property type="entry name" value="DNA-3-METHYLADENINE GLYCOSYLASE"/>
    <property type="match status" value="1"/>
</dbReference>
<dbReference type="Pfam" id="PF02245">
    <property type="entry name" value="Pur_DNA_glyco"/>
    <property type="match status" value="1"/>
</dbReference>
<dbReference type="SUPFAM" id="SSF50486">
    <property type="entry name" value="FMT C-terminal domain-like"/>
    <property type="match status" value="1"/>
</dbReference>
<protein>
    <recommendedName>
        <fullName evidence="1">Putative 3-methyladenine DNA glycosylase</fullName>
        <ecNumber evidence="1">3.2.2.-</ecNumber>
    </recommendedName>
</protein>
<sequence length="185" mass="19974">MHRLTSDVDFFARSAVQVAADLIGADFTVSGVGGTIVETEAYLPDDAASHSFAGTTARNRAMFGPPAHAYIYLSYGLHWCLNFVCLPGSAVLIRAIEPRWGIDTMRARRGVREERLLCSGPGRVGQALAISRELDGLPLGEDPFRLTLPSTKPPLAAGIRVGITKAVEQPWRFGLAGSSFVSRKF</sequence>
<feature type="chain" id="PRO_0000100099" description="Putative 3-methyladenine DNA glycosylase">
    <location>
        <begin position="1"/>
        <end position="185"/>
    </location>
</feature>